<comment type="function">
    <text evidence="2 3 5">Component of 1,2-phenylacetyl-CoA epoxidase multicomponent enzyme system which catalyzes the reduction of phenylacetyl-CoA (PA-CoA) to form 1,2-epoxyphenylacetyl-CoA. The subunit B may play a regulatory role or be directly involved in electron transport.</text>
</comment>
<comment type="pathway">
    <text>Aromatic compound metabolism; phenylacetate degradation.</text>
</comment>
<comment type="subunit">
    <text evidence="4">Homotrimer. Forms a stable heterodimer with PaaC. Probably forms an oligomer with PaaAC.</text>
</comment>
<comment type="interaction">
    <interactant intactId="EBI-1123811">
        <id>P76078</id>
    </interactant>
    <interactant intactId="EBI-1131666">
        <id>P76079</id>
        <label>paaC</label>
    </interactant>
    <organismsDiffer>false</organismsDiffer>
    <experiments>2</experiments>
</comment>
<comment type="induction">
    <text evidence="1 5">Activated by cAMP receptor protein (CRP), integration host factor (IHF) and by phenylacetyl-coenzyme A (PA-CoA) that prevents PaaX from binding its target sequences. Inhibited by PaaX.</text>
</comment>
<feature type="chain" id="PRO_0000058160" description="1,2-phenylacetyl-CoA epoxidase, subunit B">
    <location>
        <begin position="1"/>
        <end position="95"/>
    </location>
</feature>
<gene>
    <name type="primary">paaB</name>
    <name type="synonym">ynbF</name>
    <name type="ordered locus">b1389</name>
    <name type="ordered locus">JW1384</name>
</gene>
<reference key="1">
    <citation type="journal article" date="1998" name="J. Biol. Chem.">
        <title>Catabolism of phenylacetic acid in Escherichia coli. Characterization of a new aerobic hybrid pathway.</title>
        <authorList>
            <person name="Ferrandez A."/>
            <person name="Minambres B."/>
            <person name="Garcia B."/>
            <person name="Olivera E.R."/>
            <person name="Luengo J.M."/>
            <person name="Garcia J.L."/>
            <person name="Diaz E."/>
        </authorList>
    </citation>
    <scope>NUCLEOTIDE SEQUENCE [GENOMIC DNA]</scope>
    <scope>FUNCTION IN PHENYLACETATE CATABOLISM</scope>
    <scope>INDUCTION</scope>
    <source>
        <strain>W / ATCC 11105 / DSM 1900</strain>
    </source>
</reference>
<reference key="2">
    <citation type="journal article" date="1997" name="Science">
        <title>The complete genome sequence of Escherichia coli K-12.</title>
        <authorList>
            <person name="Blattner F.R."/>
            <person name="Plunkett G. III"/>
            <person name="Bloch C.A."/>
            <person name="Perna N.T."/>
            <person name="Burland V."/>
            <person name="Riley M."/>
            <person name="Collado-Vides J."/>
            <person name="Glasner J.D."/>
            <person name="Rode C.K."/>
            <person name="Mayhew G.F."/>
            <person name="Gregor J."/>
            <person name="Davis N.W."/>
            <person name="Kirkpatrick H.A."/>
            <person name="Goeden M.A."/>
            <person name="Rose D.J."/>
            <person name="Mau B."/>
            <person name="Shao Y."/>
        </authorList>
    </citation>
    <scope>NUCLEOTIDE SEQUENCE [LARGE SCALE GENOMIC DNA]</scope>
    <source>
        <strain>K12 / MG1655 / ATCC 47076</strain>
    </source>
</reference>
<reference key="3">
    <citation type="journal article" date="2006" name="Mol. Syst. Biol.">
        <title>Highly accurate genome sequences of Escherichia coli K-12 strains MG1655 and W3110.</title>
        <authorList>
            <person name="Hayashi K."/>
            <person name="Morooka N."/>
            <person name="Yamamoto Y."/>
            <person name="Fujita K."/>
            <person name="Isono K."/>
            <person name="Choi S."/>
            <person name="Ohtsubo E."/>
            <person name="Baba T."/>
            <person name="Wanner B.L."/>
            <person name="Mori H."/>
            <person name="Horiuchi T."/>
        </authorList>
    </citation>
    <scope>NUCLEOTIDE SEQUENCE [LARGE SCALE GENOMIC DNA]</scope>
    <source>
        <strain>K12 / W3110 / ATCC 27325 / DSM 5911</strain>
    </source>
</reference>
<reference key="4">
    <citation type="journal article" date="2000" name="J. Biol. Chem.">
        <title>Transcriptional regulation of the divergent paa catabolic operons for phenylacetic acid degradation in Escherichia coli.</title>
        <authorList>
            <person name="Ferrandez A."/>
            <person name="Garcia J.L."/>
            <person name="Diaz E."/>
        </authorList>
    </citation>
    <scope>TRANSCRIPTIONAL REGULATION</scope>
</reference>
<reference key="5">
    <citation type="journal article" date="2006" name="Appl. Environ. Microbiol.">
        <title>Genetic characterization of the phenylacetyl-coenzyme A oxygenase from the aerobic phenylacetic acid degradation pathway of Escherichia coli.</title>
        <authorList>
            <person name="Fernandez C."/>
            <person name="Ferrandez A."/>
            <person name="Minambres B."/>
            <person name="Diaz E."/>
            <person name="Garcia J.L."/>
        </authorList>
    </citation>
    <scope>FUNCTION AS A MONOOXYGENASE COMPONENT</scope>
</reference>
<reference key="6">
    <citation type="journal article" date="2010" name="Proc. Natl. Acad. Sci. U.S.A.">
        <title>Bacterial phenylalanine and phenylacetate catabolic pathway revealed.</title>
        <authorList>
            <person name="Teufel R."/>
            <person name="Mascaraque V."/>
            <person name="Ismail W."/>
            <person name="Voss M."/>
            <person name="Perera J."/>
            <person name="Eisenreich W."/>
            <person name="Haehnel W."/>
            <person name="Fuchs G."/>
        </authorList>
    </citation>
    <scope>FUNCTION AS A MONOOXYGENASE COMPONENT</scope>
</reference>
<reference key="7">
    <citation type="journal article" date="2011" name="J. Biol. Chem.">
        <title>Structural and functional studies of the Escherichia coli phenylacetyl-CoA monooxygenase complex.</title>
        <authorList>
            <person name="Grishin A.M."/>
            <person name="Ajamian E."/>
            <person name="Tao L."/>
            <person name="Zhang L."/>
            <person name="Menard R."/>
            <person name="Cygler M."/>
        </authorList>
    </citation>
    <scope>SUBUNIT</scope>
</reference>
<sequence length="95" mass="10942">MSNVYWPLYEVFVRGKQGLSHRHVGSLHAADERMALENARDAYTRRSEGCSIWVVKASEIVASQPEERGEFFDPAESKVYRHPTFYTIPDGIEHM</sequence>
<protein>
    <recommendedName>
        <fullName>1,2-phenylacetyl-CoA epoxidase, subunit B</fullName>
    </recommendedName>
    <alternativeName>
        <fullName>1,2-phenylacetyl-CoA monooxygenase, subunit B</fullName>
    </alternativeName>
</protein>
<keyword id="KW-1185">Reference proteome</keyword>
<evidence type="ECO:0000269" key="1">
    <source>
    </source>
</evidence>
<evidence type="ECO:0000269" key="2">
    <source>
    </source>
</evidence>
<evidence type="ECO:0000269" key="3">
    <source>
    </source>
</evidence>
<evidence type="ECO:0000269" key="4">
    <source>
    </source>
</evidence>
<evidence type="ECO:0000269" key="5">
    <source>
    </source>
</evidence>
<organism>
    <name type="scientific">Escherichia coli (strain K12)</name>
    <dbReference type="NCBI Taxonomy" id="83333"/>
    <lineage>
        <taxon>Bacteria</taxon>
        <taxon>Pseudomonadati</taxon>
        <taxon>Pseudomonadota</taxon>
        <taxon>Gammaproteobacteria</taxon>
        <taxon>Enterobacterales</taxon>
        <taxon>Enterobacteriaceae</taxon>
        <taxon>Escherichia</taxon>
    </lineage>
</organism>
<dbReference type="EMBL" id="X97452">
    <property type="protein sequence ID" value="CAA66091.1"/>
    <property type="molecule type" value="Genomic_DNA"/>
</dbReference>
<dbReference type="EMBL" id="U00096">
    <property type="protein sequence ID" value="AAC74471.1"/>
    <property type="molecule type" value="Genomic_DNA"/>
</dbReference>
<dbReference type="EMBL" id="AP009048">
    <property type="protein sequence ID" value="BAE76424.1"/>
    <property type="molecule type" value="Genomic_DNA"/>
</dbReference>
<dbReference type="PIR" id="H64889">
    <property type="entry name" value="H64889"/>
</dbReference>
<dbReference type="RefSeq" id="NP_415907.1">
    <property type="nucleotide sequence ID" value="NC_000913.3"/>
</dbReference>
<dbReference type="RefSeq" id="WP_000073393.1">
    <property type="nucleotide sequence ID" value="NZ_STEB01000005.1"/>
</dbReference>
<dbReference type="SMR" id="P76078"/>
<dbReference type="BioGRID" id="4261630">
    <property type="interactions" value="145"/>
</dbReference>
<dbReference type="ComplexPortal" id="CPX-2844">
    <property type="entry name" value="paaABCE phenylacetyl-CoA monooxygenase complex"/>
</dbReference>
<dbReference type="FunCoup" id="P76078">
    <property type="interactions" value="194"/>
</dbReference>
<dbReference type="IntAct" id="P76078">
    <property type="interactions" value="14"/>
</dbReference>
<dbReference type="STRING" id="511145.b1389"/>
<dbReference type="PaxDb" id="511145-b1389"/>
<dbReference type="EnsemblBacteria" id="AAC74471">
    <property type="protein sequence ID" value="AAC74471"/>
    <property type="gene ID" value="b1389"/>
</dbReference>
<dbReference type="GeneID" id="75203475"/>
<dbReference type="GeneID" id="947595"/>
<dbReference type="KEGG" id="ecj:JW1384"/>
<dbReference type="KEGG" id="eco:b1389"/>
<dbReference type="KEGG" id="ecoc:C3026_08110"/>
<dbReference type="PATRIC" id="fig|1411691.4.peg.882"/>
<dbReference type="EchoBASE" id="EB4046"/>
<dbReference type="eggNOG" id="COG3460">
    <property type="taxonomic scope" value="Bacteria"/>
</dbReference>
<dbReference type="HOGENOM" id="CLU_141459_2_0_6"/>
<dbReference type="InParanoid" id="P76078"/>
<dbReference type="OMA" id="QDKVYRH"/>
<dbReference type="OrthoDB" id="8593533at2"/>
<dbReference type="PhylomeDB" id="P76078"/>
<dbReference type="BioCyc" id="EcoCyc:G6710-MONOMER"/>
<dbReference type="BioCyc" id="MetaCyc:G6710-MONOMER"/>
<dbReference type="UniPathway" id="UPA00930"/>
<dbReference type="PRO" id="PR:P76078"/>
<dbReference type="Proteomes" id="UP000000625">
    <property type="component" value="Chromosome"/>
</dbReference>
<dbReference type="GO" id="GO:0005829">
    <property type="term" value="C:cytosol"/>
    <property type="evidence" value="ECO:0000303"/>
    <property type="project" value="ComplexPortal"/>
</dbReference>
<dbReference type="GO" id="GO:0062077">
    <property type="term" value="C:phenylacetyl-CoA 1,2-epoxidase complex"/>
    <property type="evidence" value="ECO:0000353"/>
    <property type="project" value="ComplexPortal"/>
</dbReference>
<dbReference type="GO" id="GO:0010124">
    <property type="term" value="P:phenylacetate catabolic process"/>
    <property type="evidence" value="ECO:0000314"/>
    <property type="project" value="ComplexPortal"/>
</dbReference>
<dbReference type="FunFam" id="3.10.20.520:FF:000001">
    <property type="entry name" value="Phenylacetate-CoA oxygenase, PaaH subunit"/>
    <property type="match status" value="1"/>
</dbReference>
<dbReference type="Gene3D" id="3.10.20.520">
    <property type="entry name" value="Phenylacetic acid degradation B"/>
    <property type="match status" value="1"/>
</dbReference>
<dbReference type="InterPro" id="IPR009359">
    <property type="entry name" value="PaaB"/>
</dbReference>
<dbReference type="InterPro" id="IPR038693">
    <property type="entry name" value="PaaB_sf"/>
</dbReference>
<dbReference type="NCBIfam" id="TIGR02157">
    <property type="entry name" value="PA_CoA_Oxy2"/>
    <property type="match status" value="1"/>
</dbReference>
<dbReference type="Pfam" id="PF06243">
    <property type="entry name" value="PaaB"/>
    <property type="match status" value="1"/>
</dbReference>
<dbReference type="PIRSF" id="PIRSF030200">
    <property type="entry name" value="PaaB"/>
    <property type="match status" value="1"/>
</dbReference>
<name>PAAB_ECOLI</name>
<accession>P76078</accession>
<accession>Q2MBD2</accession>
<proteinExistence type="evidence at protein level"/>